<sequence length="228" mass="25181">MSYVFVNDSSQTNVPLLQACIDGDFTYSKRLLESGFDPNIRDSRGRTGLHLAAARGNVDICQLLHKFGADPLATDYQGNTALHLCGHVDTIQFLVSNGLKIDICNHQGATPLVLAKRRGVNKDVIRLLESLEEQEVKGFNRGTHSKLETMQTAESESAMESHSLLNPNLQQGEGVLSSFRTTWQEFVEDLGFWRVLLLILVIALLSLGIAYYVSGVLPFVDNQPGLVH</sequence>
<gene>
    <name type="primary">Ankrd46</name>
</gene>
<accession>Q76K24</accession>
<accession>Q0VGK7</accession>
<comment type="subcellular location">
    <subcellularLocation>
        <location evidence="2">Membrane</location>
        <topology evidence="2">Single-pass membrane protein</topology>
    </subcellularLocation>
</comment>
<keyword id="KW-0040">ANK repeat</keyword>
<keyword id="KW-0472">Membrane</keyword>
<keyword id="KW-1185">Reference proteome</keyword>
<keyword id="KW-0677">Repeat</keyword>
<keyword id="KW-0812">Transmembrane</keyword>
<keyword id="KW-1133">Transmembrane helix</keyword>
<name>ANR46_RAT</name>
<evidence type="ECO:0000255" key="1"/>
<evidence type="ECO:0000305" key="2"/>
<proteinExistence type="evidence at transcript level"/>
<organism>
    <name type="scientific">Rattus norvegicus</name>
    <name type="common">Rat</name>
    <dbReference type="NCBI Taxonomy" id="10116"/>
    <lineage>
        <taxon>Eukaryota</taxon>
        <taxon>Metazoa</taxon>
        <taxon>Chordata</taxon>
        <taxon>Craniata</taxon>
        <taxon>Vertebrata</taxon>
        <taxon>Euteleostomi</taxon>
        <taxon>Mammalia</taxon>
        <taxon>Eutheria</taxon>
        <taxon>Euarchontoglires</taxon>
        <taxon>Glires</taxon>
        <taxon>Rodentia</taxon>
        <taxon>Myomorpha</taxon>
        <taxon>Muroidea</taxon>
        <taxon>Muridae</taxon>
        <taxon>Murinae</taxon>
        <taxon>Rattus</taxon>
    </lineage>
</organism>
<reference key="1">
    <citation type="submission" date="2002-11" db="EMBL/GenBank/DDBJ databases">
        <title>Human and rat homologues of a novel gene ank-s expressed in the senescence accelerated mouse prone 8 (SAMP8).</title>
        <authorList>
            <person name="Yamamura N."/>
            <person name="Koike N."/>
            <person name="Ohkuma Y."/>
            <person name="Uehara T."/>
            <person name="Nomura Y."/>
            <person name="Sakaki Y."/>
            <person name="Tashiro T."/>
            <person name="Furihata C."/>
        </authorList>
    </citation>
    <scope>NUCLEOTIDE SEQUENCE [MRNA]</scope>
    <source>
        <tissue>Brain</tissue>
    </source>
</reference>
<reference key="2">
    <citation type="journal article" date="2004" name="Genome Res.">
        <title>The status, quality, and expansion of the NIH full-length cDNA project: the Mammalian Gene Collection (MGC).</title>
        <authorList>
            <consortium name="The MGC Project Team"/>
        </authorList>
    </citation>
    <scope>NUCLEOTIDE SEQUENCE [LARGE SCALE MRNA]</scope>
    <source>
        <tissue>Testis</tissue>
    </source>
</reference>
<protein>
    <recommendedName>
        <fullName>Ankyrin repeat domain-containing protein 46</fullName>
    </recommendedName>
    <alternativeName>
        <fullName>Ankyrin repeat small protein</fullName>
        <shortName>ANK-S</shortName>
    </alternativeName>
</protein>
<feature type="chain" id="PRO_0000244580" description="Ankyrin repeat domain-containing protein 46">
    <location>
        <begin position="1"/>
        <end position="228"/>
    </location>
</feature>
<feature type="transmembrane region" description="Helical" evidence="1">
    <location>
        <begin position="195"/>
        <end position="215"/>
    </location>
</feature>
<feature type="repeat" description="ANK 1">
    <location>
        <begin position="11"/>
        <end position="40"/>
    </location>
</feature>
<feature type="repeat" description="ANK 2">
    <location>
        <begin position="44"/>
        <end position="74"/>
    </location>
</feature>
<feature type="repeat" description="ANK 3">
    <location>
        <begin position="77"/>
        <end position="103"/>
    </location>
</feature>
<feature type="repeat" description="ANK 4">
    <location>
        <begin position="107"/>
        <end position="138"/>
    </location>
</feature>
<dbReference type="EMBL" id="AB095364">
    <property type="protein sequence ID" value="BAD05179.1"/>
    <property type="molecule type" value="mRNA"/>
</dbReference>
<dbReference type="EMBL" id="BC105616">
    <property type="protein sequence ID" value="AAI05617.1"/>
    <property type="molecule type" value="mRNA"/>
</dbReference>
<dbReference type="RefSeq" id="NP_001013970.1">
    <property type="nucleotide sequence ID" value="NM_001013948.2"/>
</dbReference>
<dbReference type="RefSeq" id="XP_006241592.1">
    <property type="nucleotide sequence ID" value="XM_006241530.5"/>
</dbReference>
<dbReference type="RefSeq" id="XP_006241593.1">
    <property type="nucleotide sequence ID" value="XM_006241531.5"/>
</dbReference>
<dbReference type="RefSeq" id="XP_006241594.1">
    <property type="nucleotide sequence ID" value="XM_006241532.5"/>
</dbReference>
<dbReference type="RefSeq" id="XP_063119332.1">
    <property type="nucleotide sequence ID" value="XM_063263262.1"/>
</dbReference>
<dbReference type="SMR" id="Q76K24"/>
<dbReference type="BioGRID" id="256400">
    <property type="interactions" value="1"/>
</dbReference>
<dbReference type="FunCoup" id="Q76K24">
    <property type="interactions" value="2198"/>
</dbReference>
<dbReference type="STRING" id="10116.ENSRNOP00000034048"/>
<dbReference type="PhosphoSitePlus" id="Q76K24"/>
<dbReference type="PaxDb" id="10116-ENSRNOP00000034048"/>
<dbReference type="Ensembl" id="ENSRNOT00000036904.6">
    <property type="protein sequence ID" value="ENSRNOP00000034048.4"/>
    <property type="gene ID" value="ENSRNOG00000025504.6"/>
</dbReference>
<dbReference type="GeneID" id="299982"/>
<dbReference type="KEGG" id="rno:299982"/>
<dbReference type="UCSC" id="RGD:1309382">
    <property type="organism name" value="rat"/>
</dbReference>
<dbReference type="AGR" id="RGD:1309382"/>
<dbReference type="CTD" id="157567"/>
<dbReference type="RGD" id="1309382">
    <property type="gene designation" value="Ankrd46"/>
</dbReference>
<dbReference type="eggNOG" id="KOG0508">
    <property type="taxonomic scope" value="Eukaryota"/>
</dbReference>
<dbReference type="GeneTree" id="ENSGT00940000157094"/>
<dbReference type="HOGENOM" id="CLU_084801_0_0_1"/>
<dbReference type="InParanoid" id="Q76K24"/>
<dbReference type="OMA" id="EYQGNTA"/>
<dbReference type="OrthoDB" id="21416at2759"/>
<dbReference type="PhylomeDB" id="Q76K24"/>
<dbReference type="TreeFam" id="TF330790"/>
<dbReference type="PRO" id="PR:Q76K24"/>
<dbReference type="Proteomes" id="UP000002494">
    <property type="component" value="Chromosome 7"/>
</dbReference>
<dbReference type="Bgee" id="ENSRNOG00000025504">
    <property type="expression patterns" value="Expressed in frontal cortex and 20 other cell types or tissues"/>
</dbReference>
<dbReference type="GO" id="GO:0016020">
    <property type="term" value="C:membrane"/>
    <property type="evidence" value="ECO:0007669"/>
    <property type="project" value="UniProtKB-SubCell"/>
</dbReference>
<dbReference type="Gene3D" id="1.25.40.20">
    <property type="entry name" value="Ankyrin repeat-containing domain"/>
    <property type="match status" value="1"/>
</dbReference>
<dbReference type="InterPro" id="IPR002110">
    <property type="entry name" value="Ankyrin_rpt"/>
</dbReference>
<dbReference type="InterPro" id="IPR036770">
    <property type="entry name" value="Ankyrin_rpt-contain_sf"/>
</dbReference>
<dbReference type="PANTHER" id="PTHR24171:SF9">
    <property type="entry name" value="ANKYRIN REPEAT DOMAIN-CONTAINING PROTEIN 39"/>
    <property type="match status" value="1"/>
</dbReference>
<dbReference type="PANTHER" id="PTHR24171">
    <property type="entry name" value="ANKYRIN REPEAT DOMAIN-CONTAINING PROTEIN 39-RELATED"/>
    <property type="match status" value="1"/>
</dbReference>
<dbReference type="Pfam" id="PF12796">
    <property type="entry name" value="Ank_2"/>
    <property type="match status" value="1"/>
</dbReference>
<dbReference type="SMART" id="SM00248">
    <property type="entry name" value="ANK"/>
    <property type="match status" value="3"/>
</dbReference>
<dbReference type="SUPFAM" id="SSF48403">
    <property type="entry name" value="Ankyrin repeat"/>
    <property type="match status" value="1"/>
</dbReference>
<dbReference type="PROSITE" id="PS50297">
    <property type="entry name" value="ANK_REP_REGION"/>
    <property type="match status" value="1"/>
</dbReference>
<dbReference type="PROSITE" id="PS50088">
    <property type="entry name" value="ANK_REPEAT"/>
    <property type="match status" value="2"/>
</dbReference>